<sequence>MGRTLENKKSIVAELQETLSQSQLTLVIDYKGLTVAEITDLRKRLRPTGTLCKVTKNAFMRIAVDGNQTWQPLQSFCQETSAFLLVKDDLGGAIKAYQDFQKATKKTELRGGVMEGRSLNADQVKAIGDLPSKDQLMAQIAGAINGVATKLAVGINQVPTSLARGIKAVSEKEAA</sequence>
<gene>
    <name evidence="1" type="primary">rplJ</name>
    <name evidence="1" type="synonym">rpl10</name>
    <name type="ordered locus">Cyan7425_4011</name>
</gene>
<protein>
    <recommendedName>
        <fullName evidence="1">Large ribosomal subunit protein uL10</fullName>
    </recommendedName>
    <alternativeName>
        <fullName evidence="2">50S ribosomal protein L10</fullName>
    </alternativeName>
</protein>
<proteinExistence type="inferred from homology"/>
<comment type="function">
    <text evidence="1">Forms part of the ribosomal stalk, playing a central role in the interaction of the ribosome with GTP-bound translation factors.</text>
</comment>
<comment type="subunit">
    <text evidence="1">Part of the ribosomal stalk of the 50S ribosomal subunit. The N-terminus interacts with L11 and the large rRNA to form the base of the stalk. The C-terminus forms an elongated spine to which L12 dimers bind in a sequential fashion forming a multimeric L10(L12)X complex.</text>
</comment>
<comment type="similarity">
    <text evidence="1">Belongs to the universal ribosomal protein uL10 family.</text>
</comment>
<accession>B8HVL3</accession>
<feature type="chain" id="PRO_1000195542" description="Large ribosomal subunit protein uL10">
    <location>
        <begin position="1"/>
        <end position="175"/>
    </location>
</feature>
<evidence type="ECO:0000255" key="1">
    <source>
        <dbReference type="HAMAP-Rule" id="MF_00362"/>
    </source>
</evidence>
<evidence type="ECO:0000305" key="2"/>
<dbReference type="EMBL" id="CP001344">
    <property type="protein sequence ID" value="ACL46325.1"/>
    <property type="molecule type" value="Genomic_DNA"/>
</dbReference>
<dbReference type="SMR" id="B8HVL3"/>
<dbReference type="STRING" id="395961.Cyan7425_4011"/>
<dbReference type="KEGG" id="cyn:Cyan7425_4011"/>
<dbReference type="eggNOG" id="COG0244">
    <property type="taxonomic scope" value="Bacteria"/>
</dbReference>
<dbReference type="HOGENOM" id="CLU_092227_1_1_3"/>
<dbReference type="OrthoDB" id="9808307at2"/>
<dbReference type="GO" id="GO:0015934">
    <property type="term" value="C:large ribosomal subunit"/>
    <property type="evidence" value="ECO:0007669"/>
    <property type="project" value="InterPro"/>
</dbReference>
<dbReference type="GO" id="GO:0070180">
    <property type="term" value="F:large ribosomal subunit rRNA binding"/>
    <property type="evidence" value="ECO:0007669"/>
    <property type="project" value="UniProtKB-UniRule"/>
</dbReference>
<dbReference type="GO" id="GO:0003735">
    <property type="term" value="F:structural constituent of ribosome"/>
    <property type="evidence" value="ECO:0007669"/>
    <property type="project" value="InterPro"/>
</dbReference>
<dbReference type="GO" id="GO:0006412">
    <property type="term" value="P:translation"/>
    <property type="evidence" value="ECO:0007669"/>
    <property type="project" value="UniProtKB-UniRule"/>
</dbReference>
<dbReference type="CDD" id="cd05797">
    <property type="entry name" value="Ribosomal_L10"/>
    <property type="match status" value="1"/>
</dbReference>
<dbReference type="Gene3D" id="3.30.70.1730">
    <property type="match status" value="1"/>
</dbReference>
<dbReference type="Gene3D" id="6.10.250.290">
    <property type="match status" value="1"/>
</dbReference>
<dbReference type="HAMAP" id="MF_00362">
    <property type="entry name" value="Ribosomal_uL10"/>
    <property type="match status" value="1"/>
</dbReference>
<dbReference type="InterPro" id="IPR001790">
    <property type="entry name" value="Ribosomal_uL10"/>
</dbReference>
<dbReference type="InterPro" id="IPR043141">
    <property type="entry name" value="Ribosomal_uL10-like_sf"/>
</dbReference>
<dbReference type="InterPro" id="IPR022973">
    <property type="entry name" value="Ribosomal_uL10_bac"/>
</dbReference>
<dbReference type="InterPro" id="IPR047865">
    <property type="entry name" value="Ribosomal_uL10_bac_type"/>
</dbReference>
<dbReference type="InterPro" id="IPR002363">
    <property type="entry name" value="Ribosomal_uL10_CS_bac"/>
</dbReference>
<dbReference type="NCBIfam" id="NF000955">
    <property type="entry name" value="PRK00099.1-1"/>
    <property type="match status" value="1"/>
</dbReference>
<dbReference type="PANTHER" id="PTHR11560">
    <property type="entry name" value="39S RIBOSOMAL PROTEIN L10, MITOCHONDRIAL"/>
    <property type="match status" value="1"/>
</dbReference>
<dbReference type="Pfam" id="PF00466">
    <property type="entry name" value="Ribosomal_L10"/>
    <property type="match status" value="1"/>
</dbReference>
<dbReference type="SUPFAM" id="SSF160369">
    <property type="entry name" value="Ribosomal protein L10-like"/>
    <property type="match status" value="1"/>
</dbReference>
<dbReference type="PROSITE" id="PS01109">
    <property type="entry name" value="RIBOSOMAL_L10"/>
    <property type="match status" value="1"/>
</dbReference>
<reference key="1">
    <citation type="journal article" date="2011" name="MBio">
        <title>Novel metabolic attributes of the genus Cyanothece, comprising a group of unicellular nitrogen-fixing Cyanobacteria.</title>
        <authorList>
            <person name="Bandyopadhyay A."/>
            <person name="Elvitigala T."/>
            <person name="Welsh E."/>
            <person name="Stockel J."/>
            <person name="Liberton M."/>
            <person name="Min H."/>
            <person name="Sherman L.A."/>
            <person name="Pakrasi H.B."/>
        </authorList>
    </citation>
    <scope>NUCLEOTIDE SEQUENCE [LARGE SCALE GENOMIC DNA]</scope>
    <source>
        <strain>PCC 7425 / ATCC 29141</strain>
    </source>
</reference>
<name>RL10_CYAP4</name>
<organism>
    <name type="scientific">Cyanothece sp. (strain PCC 7425 / ATCC 29141)</name>
    <dbReference type="NCBI Taxonomy" id="395961"/>
    <lineage>
        <taxon>Bacteria</taxon>
        <taxon>Bacillati</taxon>
        <taxon>Cyanobacteriota</taxon>
        <taxon>Cyanophyceae</taxon>
        <taxon>Gomontiellales</taxon>
        <taxon>Cyanothecaceae</taxon>
        <taxon>Cyanothece</taxon>
    </lineage>
</organism>
<keyword id="KW-0687">Ribonucleoprotein</keyword>
<keyword id="KW-0689">Ribosomal protein</keyword>
<keyword id="KW-0694">RNA-binding</keyword>
<keyword id="KW-0699">rRNA-binding</keyword>